<keyword id="KW-1003">Cell membrane</keyword>
<keyword id="KW-1015">Disulfide bond</keyword>
<keyword id="KW-0297">G-protein coupled receptor</keyword>
<keyword id="KW-0325">Glycoprotein</keyword>
<keyword id="KW-0472">Membrane</keyword>
<keyword id="KW-0675">Receptor</keyword>
<keyword id="KW-1185">Reference proteome</keyword>
<keyword id="KW-0807">Transducer</keyword>
<keyword id="KW-0812">Transmembrane</keyword>
<keyword id="KW-1133">Transmembrane helix</keyword>
<protein>
    <recommendedName>
        <fullName>5-hydroxytryptamine receptor 1F</fullName>
        <shortName>5-HT-1F</shortName>
        <shortName>5-HT1F</shortName>
    </recommendedName>
    <alternativeName>
        <fullName>Serotonin receptor 1F</fullName>
    </alternativeName>
</protein>
<gene>
    <name type="primary">HTR1F</name>
</gene>
<dbReference type="EMBL" id="AB037534">
    <property type="protein sequence ID" value="BAA90454.2"/>
    <property type="molecule type" value="Genomic_DNA"/>
</dbReference>
<dbReference type="EMBL" id="AACZ04038288">
    <property type="status" value="NOT_ANNOTATED_CDS"/>
    <property type="molecule type" value="Genomic_DNA"/>
</dbReference>
<dbReference type="SMR" id="Q9N2D9"/>
<dbReference type="STRING" id="9598.ENSPTRP00000026109"/>
<dbReference type="GlyCosmos" id="Q9N2D9">
    <property type="glycosylation" value="2 sites, No reported glycans"/>
</dbReference>
<dbReference type="PaxDb" id="9598-ENSPTRP00000026109"/>
<dbReference type="eggNOG" id="KOG3656">
    <property type="taxonomic scope" value="Eukaryota"/>
</dbReference>
<dbReference type="InParanoid" id="Q9N2D9"/>
<dbReference type="OMA" id="CVIKHDH"/>
<dbReference type="Proteomes" id="UP000002277">
    <property type="component" value="Unplaced"/>
</dbReference>
<dbReference type="GO" id="GO:0030425">
    <property type="term" value="C:dendrite"/>
    <property type="evidence" value="ECO:0000318"/>
    <property type="project" value="GO_Central"/>
</dbReference>
<dbReference type="GO" id="GO:0005886">
    <property type="term" value="C:plasma membrane"/>
    <property type="evidence" value="ECO:0000250"/>
    <property type="project" value="UniProtKB"/>
</dbReference>
<dbReference type="GO" id="GO:0045202">
    <property type="term" value="C:synapse"/>
    <property type="evidence" value="ECO:0007669"/>
    <property type="project" value="GOC"/>
</dbReference>
<dbReference type="GO" id="GO:0004993">
    <property type="term" value="F:G protein-coupled serotonin receptor activity"/>
    <property type="evidence" value="ECO:0000250"/>
    <property type="project" value="UniProtKB"/>
</dbReference>
<dbReference type="GO" id="GO:0001586">
    <property type="term" value="F:Gi/o-coupled serotonin receptor activity"/>
    <property type="evidence" value="ECO:0007669"/>
    <property type="project" value="UniProtKB-ARBA"/>
</dbReference>
<dbReference type="GO" id="GO:0030594">
    <property type="term" value="F:neurotransmitter receptor activity"/>
    <property type="evidence" value="ECO:0000318"/>
    <property type="project" value="GO_Central"/>
</dbReference>
<dbReference type="GO" id="GO:0099589">
    <property type="term" value="F:serotonin receptor activity"/>
    <property type="evidence" value="ECO:0007669"/>
    <property type="project" value="UniProtKB-ARBA"/>
</dbReference>
<dbReference type="GO" id="GO:0007193">
    <property type="term" value="P:adenylate cyclase-inhibiting G protein-coupled receptor signaling pathway"/>
    <property type="evidence" value="ECO:0000250"/>
    <property type="project" value="UniProtKB"/>
</dbReference>
<dbReference type="GO" id="GO:0007198">
    <property type="term" value="P:adenylate cyclase-inhibiting serotonin receptor signaling pathway"/>
    <property type="evidence" value="ECO:0000318"/>
    <property type="project" value="GO_Central"/>
</dbReference>
<dbReference type="GO" id="GO:0007268">
    <property type="term" value="P:chemical synaptic transmission"/>
    <property type="evidence" value="ECO:0000318"/>
    <property type="project" value="GO_Central"/>
</dbReference>
<dbReference type="GO" id="GO:0007187">
    <property type="term" value="P:G protein-coupled receptor signaling pathway, coupled to cyclic nucleotide second messenger"/>
    <property type="evidence" value="ECO:0000318"/>
    <property type="project" value="GO_Central"/>
</dbReference>
<dbReference type="CDD" id="cd15334">
    <property type="entry name" value="7tmA_5-HT1F"/>
    <property type="match status" value="1"/>
</dbReference>
<dbReference type="FunFam" id="1.20.1070.10:FF:000085">
    <property type="entry name" value="5-hydroxytryptamine receptor 1F"/>
    <property type="match status" value="1"/>
</dbReference>
<dbReference type="Gene3D" id="1.20.1070.10">
    <property type="entry name" value="Rhodopsin 7-helix transmembrane proteins"/>
    <property type="match status" value="1"/>
</dbReference>
<dbReference type="InterPro" id="IPR000450">
    <property type="entry name" value="5HT1F_rcpt"/>
</dbReference>
<dbReference type="InterPro" id="IPR002231">
    <property type="entry name" value="5HT_rcpt"/>
</dbReference>
<dbReference type="InterPro" id="IPR000276">
    <property type="entry name" value="GPCR_Rhodpsn"/>
</dbReference>
<dbReference type="InterPro" id="IPR017452">
    <property type="entry name" value="GPCR_Rhodpsn_7TM"/>
</dbReference>
<dbReference type="PANTHER" id="PTHR24248:SF196">
    <property type="entry name" value="5-HYDROXYTRYPTAMINE RECEPTOR 1D"/>
    <property type="match status" value="1"/>
</dbReference>
<dbReference type="PANTHER" id="PTHR24248">
    <property type="entry name" value="ADRENERGIC RECEPTOR-RELATED G-PROTEIN COUPLED RECEPTOR"/>
    <property type="match status" value="1"/>
</dbReference>
<dbReference type="Pfam" id="PF00001">
    <property type="entry name" value="7tm_1"/>
    <property type="match status" value="1"/>
</dbReference>
<dbReference type="PRINTS" id="PR00515">
    <property type="entry name" value="5HT1FRECEPTR"/>
</dbReference>
<dbReference type="PRINTS" id="PR01101">
    <property type="entry name" value="5HTRECEPTOR"/>
</dbReference>
<dbReference type="PRINTS" id="PR00237">
    <property type="entry name" value="GPCRRHODOPSN"/>
</dbReference>
<dbReference type="SMART" id="SM01381">
    <property type="entry name" value="7TM_GPCR_Srsx"/>
    <property type="match status" value="1"/>
</dbReference>
<dbReference type="SUPFAM" id="SSF81321">
    <property type="entry name" value="Family A G protein-coupled receptor-like"/>
    <property type="match status" value="1"/>
</dbReference>
<dbReference type="PROSITE" id="PS00237">
    <property type="entry name" value="G_PROTEIN_RECEP_F1_1"/>
    <property type="match status" value="1"/>
</dbReference>
<dbReference type="PROSITE" id="PS50262">
    <property type="entry name" value="G_PROTEIN_RECEP_F1_2"/>
    <property type="match status" value="1"/>
</dbReference>
<evidence type="ECO:0000250" key="1">
    <source>
        <dbReference type="UniProtKB" id="P28221"/>
    </source>
</evidence>
<evidence type="ECO:0000250" key="2">
    <source>
        <dbReference type="UniProtKB" id="P30939"/>
    </source>
</evidence>
<evidence type="ECO:0000250" key="3">
    <source>
        <dbReference type="UniProtKB" id="P41595"/>
    </source>
</evidence>
<evidence type="ECO:0000255" key="4"/>
<evidence type="ECO:0000255" key="5">
    <source>
        <dbReference type="PROSITE-ProRule" id="PRU00521"/>
    </source>
</evidence>
<organism>
    <name type="scientific">Pan troglodytes</name>
    <name type="common">Chimpanzee</name>
    <dbReference type="NCBI Taxonomy" id="9598"/>
    <lineage>
        <taxon>Eukaryota</taxon>
        <taxon>Metazoa</taxon>
        <taxon>Chordata</taxon>
        <taxon>Craniata</taxon>
        <taxon>Vertebrata</taxon>
        <taxon>Euteleostomi</taxon>
        <taxon>Mammalia</taxon>
        <taxon>Eutheria</taxon>
        <taxon>Euarchontoglires</taxon>
        <taxon>Primates</taxon>
        <taxon>Haplorrhini</taxon>
        <taxon>Catarrhini</taxon>
        <taxon>Hominidae</taxon>
        <taxon>Pan</taxon>
    </lineage>
</organism>
<name>5HT1F_PANTR</name>
<proteinExistence type="inferred from homology"/>
<reference key="1">
    <citation type="journal article" date="2004" name="Mol. Biol. Evol.">
        <title>Human-specific amino acid changes found in 103 protein-coding genes.</title>
        <authorList>
            <person name="Kitano T."/>
            <person name="Liu Y.-H."/>
            <person name="Ueda S."/>
            <person name="Saitou N."/>
        </authorList>
    </citation>
    <scope>NUCLEOTIDE SEQUENCE [GENOMIC DNA]</scope>
    <source>
        <strain>Isolate 220</strain>
    </source>
</reference>
<reference key="2">
    <citation type="journal article" date="2005" name="Nature">
        <title>Initial sequence of the chimpanzee genome and comparison with the human genome.</title>
        <authorList>
            <consortium name="Chimpanzee sequencing and analysis consortium"/>
        </authorList>
    </citation>
    <scope>NUCLEOTIDE SEQUENCE [LARGE SCALE GENOMIC DNA]</scope>
</reference>
<feature type="chain" id="PRO_0000068939" description="5-hydroxytryptamine receptor 1F">
    <location>
        <begin position="1"/>
        <end position="365" status="greater than"/>
    </location>
</feature>
<feature type="topological domain" description="Extracellular" evidence="2">
    <location>
        <begin position="1"/>
        <end position="24"/>
    </location>
</feature>
<feature type="transmembrane region" description="Helical; Name=1" evidence="2">
    <location>
        <begin position="25"/>
        <end position="49"/>
    </location>
</feature>
<feature type="topological domain" description="Cytoplasmic" evidence="2">
    <location>
        <begin position="50"/>
        <end position="59"/>
    </location>
</feature>
<feature type="transmembrane region" description="Helical; Name=2" evidence="2">
    <location>
        <begin position="60"/>
        <end position="81"/>
    </location>
</feature>
<feature type="topological domain" description="Extracellular" evidence="2">
    <location>
        <begin position="82"/>
        <end position="96"/>
    </location>
</feature>
<feature type="transmembrane region" description="Helical; Name=3" evidence="2">
    <location>
        <begin position="97"/>
        <end position="119"/>
    </location>
</feature>
<feature type="topological domain" description="Cytoplasmic" evidence="2">
    <location>
        <begin position="120"/>
        <end position="139"/>
    </location>
</feature>
<feature type="transmembrane region" description="Helical; Name=4" evidence="2">
    <location>
        <begin position="140"/>
        <end position="159"/>
    </location>
</feature>
<feature type="topological domain" description="Extracellular" evidence="2">
    <location>
        <begin position="160"/>
        <end position="178"/>
    </location>
</feature>
<feature type="transmembrane region" description="Helical; Name=5" evidence="2">
    <location>
        <begin position="179"/>
        <end position="202"/>
    </location>
</feature>
<feature type="topological domain" description="Cytoplasmic" evidence="2">
    <location>
        <begin position="203"/>
        <end position="291"/>
    </location>
</feature>
<feature type="transmembrane region" description="Helical; Name=6" evidence="2">
    <location>
        <begin position="292"/>
        <end position="315"/>
    </location>
</feature>
<feature type="topological domain" description="Extracellular" evidence="2">
    <location>
        <begin position="316"/>
        <end position="327"/>
    </location>
</feature>
<feature type="transmembrane region" description="Helical; Name=7" evidence="2">
    <location>
        <begin position="328"/>
        <end position="350"/>
    </location>
</feature>
<feature type="topological domain" description="Cytoplasmic" evidence="2">
    <location>
        <begin position="351"/>
        <end position="365"/>
    </location>
</feature>
<feature type="short sequence motif" description="DRY motif; important for ligand-induced conformation changes" evidence="3">
    <location>
        <begin position="120"/>
        <end position="122"/>
    </location>
</feature>
<feature type="short sequence motif" description="NPxxY motif; important for ligand-induced conformation changes and signaling" evidence="3">
    <location>
        <begin position="343"/>
        <end position="347"/>
    </location>
</feature>
<feature type="binding site" evidence="1">
    <location>
        <position position="103"/>
    </location>
    <ligand>
        <name>serotonin</name>
        <dbReference type="ChEBI" id="CHEBI:350546"/>
    </ligand>
</feature>
<feature type="binding site" evidence="1">
    <location>
        <position position="107"/>
    </location>
    <ligand>
        <name>serotonin</name>
        <dbReference type="ChEBI" id="CHEBI:350546"/>
    </ligand>
</feature>
<feature type="glycosylation site" description="N-linked (GlcNAc...) asparagine" evidence="4">
    <location>
        <position position="5"/>
    </location>
</feature>
<feature type="glycosylation site" description="N-linked (GlcNAc...) asparagine" evidence="4">
    <location>
        <position position="10"/>
    </location>
</feature>
<feature type="disulfide bond" evidence="5">
    <location>
        <begin position="96"/>
        <end position="172"/>
    </location>
</feature>
<feature type="non-terminal residue">
    <location>
        <position position="365"/>
    </location>
</feature>
<comment type="function">
    <text evidence="2">G-protein coupled receptor for 5-hydroxytryptamine (serotonin) (By similarity). Also functions as a receptor for various alkaloids and psychoactive substances (By similarity). Ligand binding causes a conformation change that triggers signaling via guanine nucleotide-binding proteins (G proteins) and modulates the activity of downstream effectors, such as adenylate cyclase (By similarity). HTR1F is coupled to G(i)/G(o) G alpha proteins and mediates inhibitory neurotransmission by inhibiting adenylate cyclase activity (By similarity).</text>
</comment>
<comment type="subcellular location">
    <subcellularLocation>
        <location evidence="2">Cell membrane</location>
        <topology evidence="2">Multi-pass membrane protein</topology>
    </subcellularLocation>
</comment>
<comment type="similarity">
    <text evidence="5">Belongs to the G-protein coupled receptor 1 family.</text>
</comment>
<accession>Q9N2D9</accession>
<sequence>MDFLNSSDQNLTSEELLNRMPSKILVSLTLSGLALMTTTINSLVIAAIIVTRKLHHPANYLICSLAVTDFLVAVLVMPFSIVYIVRESWIMGQVVCDIWLSVDITCCTCSILHLSAIALDRYRAITDAVEYARKRTPKHAGIMITIVWIISVFISMPPLFWRHQGTSRDDECIIKHDHIVSTIYSTFGAFYIPLALILILYYKIYRAAKTLYHKRQASRIAKEEVNGQVLLESGEKSTKSVSTSYVLEKSLSDPSTDFDKIHSTVRSLRSEFKHEKSWRRQKISGTRERKAATTLGLILGAFVICWLPFFVKELVVNVCDKCKISEEMSNFLAWLGYLNSLINPLIYTIFNEDFKKAFQKLVRCR</sequence>